<comment type="function">
    <text evidence="1">Involved in correct processing of both the 5' and 3' ends of 23S rRNA precursor. Processes 30S rRNA precursor transcript even in absence of ribonuclease 3 (Rnc); Rnc processes 30S rRNA into smaller rRNA precursors.</text>
</comment>
<comment type="cofactor">
    <cofactor evidence="1">
        <name>Mg(2+)</name>
        <dbReference type="ChEBI" id="CHEBI:18420"/>
    </cofactor>
</comment>
<comment type="subunit">
    <text evidence="1">Homodimer.</text>
</comment>
<comment type="subcellular location">
    <subcellularLocation>
        <location evidence="1">Cytoplasm</location>
    </subcellularLocation>
</comment>
<comment type="similarity">
    <text evidence="1">Belongs to the MrnC RNase family.</text>
</comment>
<name>MRNC_THEVB</name>
<keyword id="KW-0963">Cytoplasm</keyword>
<keyword id="KW-0255">Endonuclease</keyword>
<keyword id="KW-0378">Hydrolase</keyword>
<keyword id="KW-0460">Magnesium</keyword>
<keyword id="KW-0540">Nuclease</keyword>
<keyword id="KW-1185">Reference proteome</keyword>
<keyword id="KW-0690">Ribosome biogenesis</keyword>
<keyword id="KW-0694">RNA-binding</keyword>
<keyword id="KW-0698">rRNA processing</keyword>
<keyword id="KW-0699">rRNA-binding</keyword>
<reference key="1">
    <citation type="journal article" date="2002" name="DNA Res.">
        <title>Complete genome structure of the thermophilic cyanobacterium Thermosynechococcus elongatus BP-1.</title>
        <authorList>
            <person name="Nakamura Y."/>
            <person name="Kaneko T."/>
            <person name="Sato S."/>
            <person name="Ikeuchi M."/>
            <person name="Katoh H."/>
            <person name="Sasamoto S."/>
            <person name="Watanabe A."/>
            <person name="Iriguchi M."/>
            <person name="Kawashima K."/>
            <person name="Kimura T."/>
            <person name="Kishida Y."/>
            <person name="Kiyokawa C."/>
            <person name="Kohara M."/>
            <person name="Matsumoto M."/>
            <person name="Matsuno A."/>
            <person name="Nakazaki N."/>
            <person name="Shimpo S."/>
            <person name="Sugimoto M."/>
            <person name="Takeuchi C."/>
            <person name="Yamada M."/>
            <person name="Tabata S."/>
        </authorList>
    </citation>
    <scope>NUCLEOTIDE SEQUENCE [LARGE SCALE GENOMIC DNA]</scope>
    <source>
        <strain>NIES-2133 / IAM M-273 / BP-1</strain>
    </source>
</reference>
<sequence length="151" mass="17261">MLDFGELLPLQPPTIPAHQLPPAALAYFGDAVYELFIRLLFLTPPQRINAYHRQVVAHVRAESQARYMDFLWEYCTETERSIFRQGRNAAADGPKRVAAKIYRQATGFEALLGYLYLTNPQRLQEIFQLLAGHIRSEVENKTHAAESPSEM</sequence>
<organism>
    <name type="scientific">Thermosynechococcus vestitus (strain NIES-2133 / IAM M-273 / BP-1)</name>
    <dbReference type="NCBI Taxonomy" id="197221"/>
    <lineage>
        <taxon>Bacteria</taxon>
        <taxon>Bacillati</taxon>
        <taxon>Cyanobacteriota</taxon>
        <taxon>Cyanophyceae</taxon>
        <taxon>Acaryochloridales</taxon>
        <taxon>Thermosynechococcaceae</taxon>
        <taxon>Thermosynechococcus</taxon>
    </lineage>
</organism>
<protein>
    <recommendedName>
        <fullName evidence="1">Mini-ribonuclease 3</fullName>
        <shortName evidence="1">Mini-3</shortName>
        <shortName evidence="1">Mini-RNase 3</shortName>
        <ecNumber evidence="1">3.1.26.-</ecNumber>
    </recommendedName>
    <alternativeName>
        <fullName evidence="1">Mini-RNase III</fullName>
        <shortName evidence="1">Mini-III</shortName>
    </alternativeName>
</protein>
<proteinExistence type="inferred from homology"/>
<gene>
    <name evidence="1" type="primary">mrnC</name>
    <name type="ordered locus">tlr0428</name>
</gene>
<dbReference type="EC" id="3.1.26.-" evidence="1"/>
<dbReference type="EMBL" id="BA000039">
    <property type="protein sequence ID" value="BAC07980.1"/>
    <property type="molecule type" value="Genomic_DNA"/>
</dbReference>
<dbReference type="RefSeq" id="NP_681218.1">
    <property type="nucleotide sequence ID" value="NC_004113.1"/>
</dbReference>
<dbReference type="RefSeq" id="WP_011056283.1">
    <property type="nucleotide sequence ID" value="NC_004113.1"/>
</dbReference>
<dbReference type="SMR" id="Q8DLQ0"/>
<dbReference type="STRING" id="197221.gene:10747017"/>
<dbReference type="EnsemblBacteria" id="BAC07980">
    <property type="protein sequence ID" value="BAC07980"/>
    <property type="gene ID" value="BAC07980"/>
</dbReference>
<dbReference type="KEGG" id="tel:tlr0428"/>
<dbReference type="PATRIC" id="fig|197221.4.peg.452"/>
<dbReference type="eggNOG" id="COG1939">
    <property type="taxonomic scope" value="Bacteria"/>
</dbReference>
<dbReference type="Proteomes" id="UP000000440">
    <property type="component" value="Chromosome"/>
</dbReference>
<dbReference type="GO" id="GO:0005737">
    <property type="term" value="C:cytoplasm"/>
    <property type="evidence" value="ECO:0007669"/>
    <property type="project" value="UniProtKB-SubCell"/>
</dbReference>
<dbReference type="GO" id="GO:0004525">
    <property type="term" value="F:ribonuclease III activity"/>
    <property type="evidence" value="ECO:0007669"/>
    <property type="project" value="InterPro"/>
</dbReference>
<dbReference type="GO" id="GO:0019843">
    <property type="term" value="F:rRNA binding"/>
    <property type="evidence" value="ECO:0007669"/>
    <property type="project" value="UniProtKB-UniRule"/>
</dbReference>
<dbReference type="GO" id="GO:0006364">
    <property type="term" value="P:rRNA processing"/>
    <property type="evidence" value="ECO:0007669"/>
    <property type="project" value="UniProtKB-UniRule"/>
</dbReference>
<dbReference type="Gene3D" id="1.10.1520.10">
    <property type="entry name" value="Ribonuclease III domain"/>
    <property type="match status" value="1"/>
</dbReference>
<dbReference type="HAMAP" id="MF_01468">
    <property type="entry name" value="RNase_Mini_III"/>
    <property type="match status" value="1"/>
</dbReference>
<dbReference type="InterPro" id="IPR008226">
    <property type="entry name" value="Mini3_fam"/>
</dbReference>
<dbReference type="InterPro" id="IPR000999">
    <property type="entry name" value="RNase_III_dom"/>
</dbReference>
<dbReference type="InterPro" id="IPR036389">
    <property type="entry name" value="RNase_III_sf"/>
</dbReference>
<dbReference type="PANTHER" id="PTHR34276">
    <property type="entry name" value="MINI-RIBONUCLEASE 3"/>
    <property type="match status" value="1"/>
</dbReference>
<dbReference type="PANTHER" id="PTHR34276:SF1">
    <property type="entry name" value="MINI-RIBONUCLEASE 3"/>
    <property type="match status" value="1"/>
</dbReference>
<dbReference type="Pfam" id="PF00636">
    <property type="entry name" value="Ribonuclease_3"/>
    <property type="match status" value="1"/>
</dbReference>
<dbReference type="SMART" id="SM00535">
    <property type="entry name" value="RIBOc"/>
    <property type="match status" value="1"/>
</dbReference>
<dbReference type="SUPFAM" id="SSF69065">
    <property type="entry name" value="RNase III domain-like"/>
    <property type="match status" value="1"/>
</dbReference>
<feature type="chain" id="PRO_0000415996" description="Mini-ribonuclease 3">
    <location>
        <begin position="1"/>
        <end position="151"/>
    </location>
</feature>
<feature type="active site" evidence="1">
    <location>
        <position position="30"/>
    </location>
</feature>
<accession>Q8DLQ0</accession>
<evidence type="ECO:0000255" key="1">
    <source>
        <dbReference type="HAMAP-Rule" id="MF_01468"/>
    </source>
</evidence>